<sequence>MERTCLAVILAAGDSTRMKSSKSKVLHPVAGRPMIAHVVEAVASAGISSVALVVGRDAGEVAKAASIDGVGIEAYLQQQRLGTGHAVLAAREAIAKGYDDILVTYGDVPLQTNGPLKAARQGLAEGSDVVVIGFHTDRPTGYGRLLVKDGELIAIREEKDASDAERAVTWCNSGLMAINGRKALDLLSRIGNANAKGEFYLTDLVEIARSLGGRVTAVDAPEIEMTGCNNRAELAVIERFWQERRRREMMLAGVTMIAPETVFLSYDTVIGQDALIEPNVVFGPGAVIDSGAVIHAFSHIEGAHVSEGATVGPFARLRPGADLAMGSKVGNFCEVKNGRIGVGAKVNHLTYIGDAVVGAGSNIGAGTITCNYDGVNKSETVIGENAFIGSNSSLVAPVTIGDGAYIASGSVITVDVPADALALGRARQEIKPGRATLLRQRALAIKAAKKAEA</sequence>
<accession>Q2K8G2</accession>
<gene>
    <name evidence="1" type="primary">glmU</name>
    <name type="ordered locus">RHE_CH02090</name>
</gene>
<proteinExistence type="inferred from homology"/>
<organism>
    <name type="scientific">Rhizobium etli (strain ATCC 51251 / DSM 11541 / JCM 21823 / NBRC 15573 / CFN 42)</name>
    <dbReference type="NCBI Taxonomy" id="347834"/>
    <lineage>
        <taxon>Bacteria</taxon>
        <taxon>Pseudomonadati</taxon>
        <taxon>Pseudomonadota</taxon>
        <taxon>Alphaproteobacteria</taxon>
        <taxon>Hyphomicrobiales</taxon>
        <taxon>Rhizobiaceae</taxon>
        <taxon>Rhizobium/Agrobacterium group</taxon>
        <taxon>Rhizobium</taxon>
    </lineage>
</organism>
<name>GLMU_RHIEC</name>
<comment type="function">
    <text evidence="1">Catalyzes the last two sequential reactions in the de novo biosynthetic pathway for UDP-N-acetylglucosamine (UDP-GlcNAc). The C-terminal domain catalyzes the transfer of acetyl group from acetyl coenzyme A to glucosamine-1-phosphate (GlcN-1-P) to produce N-acetylglucosamine-1-phosphate (GlcNAc-1-P), which is converted into UDP-GlcNAc by the transfer of uridine 5-monophosphate (from uridine 5-triphosphate), a reaction catalyzed by the N-terminal domain.</text>
</comment>
<comment type="catalytic activity">
    <reaction evidence="1">
        <text>alpha-D-glucosamine 1-phosphate + acetyl-CoA = N-acetyl-alpha-D-glucosamine 1-phosphate + CoA + H(+)</text>
        <dbReference type="Rhea" id="RHEA:13725"/>
        <dbReference type="ChEBI" id="CHEBI:15378"/>
        <dbReference type="ChEBI" id="CHEBI:57287"/>
        <dbReference type="ChEBI" id="CHEBI:57288"/>
        <dbReference type="ChEBI" id="CHEBI:57776"/>
        <dbReference type="ChEBI" id="CHEBI:58516"/>
        <dbReference type="EC" id="2.3.1.157"/>
    </reaction>
</comment>
<comment type="catalytic activity">
    <reaction evidence="1">
        <text>N-acetyl-alpha-D-glucosamine 1-phosphate + UTP + H(+) = UDP-N-acetyl-alpha-D-glucosamine + diphosphate</text>
        <dbReference type="Rhea" id="RHEA:13509"/>
        <dbReference type="ChEBI" id="CHEBI:15378"/>
        <dbReference type="ChEBI" id="CHEBI:33019"/>
        <dbReference type="ChEBI" id="CHEBI:46398"/>
        <dbReference type="ChEBI" id="CHEBI:57705"/>
        <dbReference type="ChEBI" id="CHEBI:57776"/>
        <dbReference type="EC" id="2.7.7.23"/>
    </reaction>
</comment>
<comment type="cofactor">
    <cofactor evidence="1">
        <name>Mg(2+)</name>
        <dbReference type="ChEBI" id="CHEBI:18420"/>
    </cofactor>
    <text evidence="1">Binds 1 Mg(2+) ion per subunit.</text>
</comment>
<comment type="pathway">
    <text evidence="1">Nucleotide-sugar biosynthesis; UDP-N-acetyl-alpha-D-glucosamine biosynthesis; N-acetyl-alpha-D-glucosamine 1-phosphate from alpha-D-glucosamine 6-phosphate (route II): step 2/2.</text>
</comment>
<comment type="pathway">
    <text evidence="1">Nucleotide-sugar biosynthesis; UDP-N-acetyl-alpha-D-glucosamine biosynthesis; UDP-N-acetyl-alpha-D-glucosamine from N-acetyl-alpha-D-glucosamine 1-phosphate: step 1/1.</text>
</comment>
<comment type="pathway">
    <text evidence="1">Bacterial outer membrane biogenesis; LPS lipid A biosynthesis.</text>
</comment>
<comment type="subunit">
    <text evidence="1">Homotrimer.</text>
</comment>
<comment type="subcellular location">
    <subcellularLocation>
        <location evidence="1">Cytoplasm</location>
    </subcellularLocation>
</comment>
<comment type="similarity">
    <text evidence="1">In the N-terminal section; belongs to the N-acetylglucosamine-1-phosphate uridyltransferase family.</text>
</comment>
<comment type="similarity">
    <text evidence="1">In the C-terminal section; belongs to the transferase hexapeptide repeat family.</text>
</comment>
<evidence type="ECO:0000255" key="1">
    <source>
        <dbReference type="HAMAP-Rule" id="MF_01631"/>
    </source>
</evidence>
<dbReference type="EC" id="2.7.7.23" evidence="1"/>
<dbReference type="EC" id="2.3.1.157" evidence="1"/>
<dbReference type="EMBL" id="CP000133">
    <property type="protein sequence ID" value="ABC90874.1"/>
    <property type="molecule type" value="Genomic_DNA"/>
</dbReference>
<dbReference type="RefSeq" id="WP_011425358.1">
    <property type="nucleotide sequence ID" value="NC_007761.1"/>
</dbReference>
<dbReference type="SMR" id="Q2K8G2"/>
<dbReference type="KEGG" id="ret:RHE_CH02090"/>
<dbReference type="eggNOG" id="COG1207">
    <property type="taxonomic scope" value="Bacteria"/>
</dbReference>
<dbReference type="HOGENOM" id="CLU_029499_15_2_5"/>
<dbReference type="OrthoDB" id="9775031at2"/>
<dbReference type="UniPathway" id="UPA00113">
    <property type="reaction ID" value="UER00532"/>
</dbReference>
<dbReference type="UniPathway" id="UPA00113">
    <property type="reaction ID" value="UER00533"/>
</dbReference>
<dbReference type="UniPathway" id="UPA00973"/>
<dbReference type="Proteomes" id="UP000001936">
    <property type="component" value="Chromosome"/>
</dbReference>
<dbReference type="GO" id="GO:0005737">
    <property type="term" value="C:cytoplasm"/>
    <property type="evidence" value="ECO:0007669"/>
    <property type="project" value="UniProtKB-SubCell"/>
</dbReference>
<dbReference type="GO" id="GO:0016020">
    <property type="term" value="C:membrane"/>
    <property type="evidence" value="ECO:0007669"/>
    <property type="project" value="GOC"/>
</dbReference>
<dbReference type="GO" id="GO:0019134">
    <property type="term" value="F:glucosamine-1-phosphate N-acetyltransferase activity"/>
    <property type="evidence" value="ECO:0007669"/>
    <property type="project" value="UniProtKB-UniRule"/>
</dbReference>
<dbReference type="GO" id="GO:0000287">
    <property type="term" value="F:magnesium ion binding"/>
    <property type="evidence" value="ECO:0007669"/>
    <property type="project" value="UniProtKB-UniRule"/>
</dbReference>
<dbReference type="GO" id="GO:0003977">
    <property type="term" value="F:UDP-N-acetylglucosamine diphosphorylase activity"/>
    <property type="evidence" value="ECO:0007669"/>
    <property type="project" value="UniProtKB-UniRule"/>
</dbReference>
<dbReference type="GO" id="GO:0000902">
    <property type="term" value="P:cell morphogenesis"/>
    <property type="evidence" value="ECO:0007669"/>
    <property type="project" value="UniProtKB-UniRule"/>
</dbReference>
<dbReference type="GO" id="GO:0071555">
    <property type="term" value="P:cell wall organization"/>
    <property type="evidence" value="ECO:0007669"/>
    <property type="project" value="UniProtKB-KW"/>
</dbReference>
<dbReference type="GO" id="GO:0009245">
    <property type="term" value="P:lipid A biosynthetic process"/>
    <property type="evidence" value="ECO:0007669"/>
    <property type="project" value="UniProtKB-UniRule"/>
</dbReference>
<dbReference type="GO" id="GO:0009252">
    <property type="term" value="P:peptidoglycan biosynthetic process"/>
    <property type="evidence" value="ECO:0007669"/>
    <property type="project" value="UniProtKB-UniRule"/>
</dbReference>
<dbReference type="GO" id="GO:0008360">
    <property type="term" value="P:regulation of cell shape"/>
    <property type="evidence" value="ECO:0007669"/>
    <property type="project" value="UniProtKB-KW"/>
</dbReference>
<dbReference type="GO" id="GO:0006048">
    <property type="term" value="P:UDP-N-acetylglucosamine biosynthetic process"/>
    <property type="evidence" value="ECO:0007669"/>
    <property type="project" value="UniProtKB-UniPathway"/>
</dbReference>
<dbReference type="CDD" id="cd02540">
    <property type="entry name" value="GT2_GlmU_N_bac"/>
    <property type="match status" value="1"/>
</dbReference>
<dbReference type="CDD" id="cd03353">
    <property type="entry name" value="LbH_GlmU_C"/>
    <property type="match status" value="1"/>
</dbReference>
<dbReference type="Gene3D" id="2.160.10.10">
    <property type="entry name" value="Hexapeptide repeat proteins"/>
    <property type="match status" value="1"/>
</dbReference>
<dbReference type="Gene3D" id="3.90.550.10">
    <property type="entry name" value="Spore Coat Polysaccharide Biosynthesis Protein SpsA, Chain A"/>
    <property type="match status" value="1"/>
</dbReference>
<dbReference type="HAMAP" id="MF_01631">
    <property type="entry name" value="GlmU"/>
    <property type="match status" value="1"/>
</dbReference>
<dbReference type="InterPro" id="IPR005882">
    <property type="entry name" value="Bifunctional_GlmU"/>
</dbReference>
<dbReference type="InterPro" id="IPR050065">
    <property type="entry name" value="GlmU-like"/>
</dbReference>
<dbReference type="InterPro" id="IPR038009">
    <property type="entry name" value="GlmU_C_LbH"/>
</dbReference>
<dbReference type="InterPro" id="IPR001451">
    <property type="entry name" value="Hexapep"/>
</dbReference>
<dbReference type="InterPro" id="IPR018357">
    <property type="entry name" value="Hexapep_transf_CS"/>
</dbReference>
<dbReference type="InterPro" id="IPR025877">
    <property type="entry name" value="MobA-like_NTP_Trfase"/>
</dbReference>
<dbReference type="InterPro" id="IPR029044">
    <property type="entry name" value="Nucleotide-diphossugar_trans"/>
</dbReference>
<dbReference type="InterPro" id="IPR011004">
    <property type="entry name" value="Trimer_LpxA-like_sf"/>
</dbReference>
<dbReference type="NCBIfam" id="TIGR01173">
    <property type="entry name" value="glmU"/>
    <property type="match status" value="1"/>
</dbReference>
<dbReference type="NCBIfam" id="NF010933">
    <property type="entry name" value="PRK14353.1"/>
    <property type="match status" value="1"/>
</dbReference>
<dbReference type="PANTHER" id="PTHR43584:SF3">
    <property type="entry name" value="BIFUNCTIONAL PROTEIN GLMU"/>
    <property type="match status" value="1"/>
</dbReference>
<dbReference type="PANTHER" id="PTHR43584">
    <property type="entry name" value="NUCLEOTIDYL TRANSFERASE"/>
    <property type="match status" value="1"/>
</dbReference>
<dbReference type="Pfam" id="PF00132">
    <property type="entry name" value="Hexapep"/>
    <property type="match status" value="2"/>
</dbReference>
<dbReference type="Pfam" id="PF12804">
    <property type="entry name" value="NTP_transf_3"/>
    <property type="match status" value="1"/>
</dbReference>
<dbReference type="SUPFAM" id="SSF53448">
    <property type="entry name" value="Nucleotide-diphospho-sugar transferases"/>
    <property type="match status" value="1"/>
</dbReference>
<dbReference type="SUPFAM" id="SSF51161">
    <property type="entry name" value="Trimeric LpxA-like enzymes"/>
    <property type="match status" value="1"/>
</dbReference>
<dbReference type="PROSITE" id="PS00101">
    <property type="entry name" value="HEXAPEP_TRANSFERASES"/>
    <property type="match status" value="1"/>
</dbReference>
<protein>
    <recommendedName>
        <fullName evidence="1">Bifunctional protein GlmU</fullName>
    </recommendedName>
    <domain>
        <recommendedName>
            <fullName evidence="1">UDP-N-acetylglucosamine pyrophosphorylase</fullName>
            <ecNumber evidence="1">2.7.7.23</ecNumber>
        </recommendedName>
        <alternativeName>
            <fullName evidence="1">N-acetylglucosamine-1-phosphate uridyltransferase</fullName>
        </alternativeName>
    </domain>
    <domain>
        <recommendedName>
            <fullName evidence="1">Glucosamine-1-phosphate N-acetyltransferase</fullName>
            <ecNumber evidence="1">2.3.1.157</ecNumber>
        </recommendedName>
    </domain>
</protein>
<feature type="chain" id="PRO_0000244303" description="Bifunctional protein GlmU">
    <location>
        <begin position="1"/>
        <end position="453"/>
    </location>
</feature>
<feature type="region of interest" description="Pyrophosphorylase" evidence="1">
    <location>
        <begin position="1"/>
        <end position="231"/>
    </location>
</feature>
<feature type="region of interest" description="Linker" evidence="1">
    <location>
        <begin position="232"/>
        <end position="252"/>
    </location>
</feature>
<feature type="region of interest" description="N-acetyltransferase" evidence="1">
    <location>
        <begin position="253"/>
        <end position="453"/>
    </location>
</feature>
<feature type="active site" description="Proton acceptor" evidence="1">
    <location>
        <position position="348"/>
    </location>
</feature>
<feature type="binding site" evidence="1">
    <location>
        <begin position="10"/>
        <end position="13"/>
    </location>
    <ligand>
        <name>UDP-N-acetyl-alpha-D-glucosamine</name>
        <dbReference type="ChEBI" id="CHEBI:57705"/>
    </ligand>
</feature>
<feature type="binding site" evidence="1">
    <location>
        <position position="24"/>
    </location>
    <ligand>
        <name>UDP-N-acetyl-alpha-D-glucosamine</name>
        <dbReference type="ChEBI" id="CHEBI:57705"/>
    </ligand>
</feature>
<feature type="binding site" evidence="1">
    <location>
        <position position="77"/>
    </location>
    <ligand>
        <name>UDP-N-acetyl-alpha-D-glucosamine</name>
        <dbReference type="ChEBI" id="CHEBI:57705"/>
    </ligand>
</feature>
<feature type="binding site" evidence="1">
    <location>
        <begin position="82"/>
        <end position="83"/>
    </location>
    <ligand>
        <name>UDP-N-acetyl-alpha-D-glucosamine</name>
        <dbReference type="ChEBI" id="CHEBI:57705"/>
    </ligand>
</feature>
<feature type="binding site" evidence="1">
    <location>
        <begin position="105"/>
        <end position="107"/>
    </location>
    <ligand>
        <name>UDP-N-acetyl-alpha-D-glucosamine</name>
        <dbReference type="ChEBI" id="CHEBI:57705"/>
    </ligand>
</feature>
<feature type="binding site" evidence="1">
    <location>
        <position position="107"/>
    </location>
    <ligand>
        <name>Mg(2+)</name>
        <dbReference type="ChEBI" id="CHEBI:18420"/>
    </ligand>
</feature>
<feature type="binding site" evidence="1">
    <location>
        <position position="143"/>
    </location>
    <ligand>
        <name>UDP-N-acetyl-alpha-D-glucosamine</name>
        <dbReference type="ChEBI" id="CHEBI:57705"/>
    </ligand>
</feature>
<feature type="binding site" evidence="1">
    <location>
        <position position="157"/>
    </location>
    <ligand>
        <name>UDP-N-acetyl-alpha-D-glucosamine</name>
        <dbReference type="ChEBI" id="CHEBI:57705"/>
    </ligand>
</feature>
<feature type="binding site" evidence="1">
    <location>
        <position position="172"/>
    </location>
    <ligand>
        <name>UDP-N-acetyl-alpha-D-glucosamine</name>
        <dbReference type="ChEBI" id="CHEBI:57705"/>
    </ligand>
</feature>
<feature type="binding site" evidence="1">
    <location>
        <position position="229"/>
    </location>
    <ligand>
        <name>Mg(2+)</name>
        <dbReference type="ChEBI" id="CHEBI:18420"/>
    </ligand>
</feature>
<feature type="binding site" evidence="1">
    <location>
        <position position="229"/>
    </location>
    <ligand>
        <name>UDP-N-acetyl-alpha-D-glucosamine</name>
        <dbReference type="ChEBI" id="CHEBI:57705"/>
    </ligand>
</feature>
<feature type="binding site" evidence="1">
    <location>
        <position position="318"/>
    </location>
    <ligand>
        <name>UDP-N-acetyl-alpha-D-glucosamine</name>
        <dbReference type="ChEBI" id="CHEBI:57705"/>
    </ligand>
</feature>
<feature type="binding site" evidence="1">
    <location>
        <position position="336"/>
    </location>
    <ligand>
        <name>UDP-N-acetyl-alpha-D-glucosamine</name>
        <dbReference type="ChEBI" id="CHEBI:57705"/>
    </ligand>
</feature>
<feature type="binding site" evidence="1">
    <location>
        <position position="351"/>
    </location>
    <ligand>
        <name>UDP-N-acetyl-alpha-D-glucosamine</name>
        <dbReference type="ChEBI" id="CHEBI:57705"/>
    </ligand>
</feature>
<feature type="binding site" evidence="1">
    <location>
        <position position="362"/>
    </location>
    <ligand>
        <name>UDP-N-acetyl-alpha-D-glucosamine</name>
        <dbReference type="ChEBI" id="CHEBI:57705"/>
    </ligand>
</feature>
<feature type="binding site" evidence="1">
    <location>
        <position position="365"/>
    </location>
    <ligand>
        <name>acetyl-CoA</name>
        <dbReference type="ChEBI" id="CHEBI:57288"/>
    </ligand>
</feature>
<feature type="binding site" evidence="1">
    <location>
        <begin position="371"/>
        <end position="372"/>
    </location>
    <ligand>
        <name>acetyl-CoA</name>
        <dbReference type="ChEBI" id="CHEBI:57288"/>
    </ligand>
</feature>
<feature type="binding site" evidence="1">
    <location>
        <position position="390"/>
    </location>
    <ligand>
        <name>acetyl-CoA</name>
        <dbReference type="ChEBI" id="CHEBI:57288"/>
    </ligand>
</feature>
<feature type="binding site" evidence="1">
    <location>
        <position position="408"/>
    </location>
    <ligand>
        <name>acetyl-CoA</name>
        <dbReference type="ChEBI" id="CHEBI:57288"/>
    </ligand>
</feature>
<feature type="binding site" evidence="1">
    <location>
        <position position="425"/>
    </location>
    <ligand>
        <name>acetyl-CoA</name>
        <dbReference type="ChEBI" id="CHEBI:57288"/>
    </ligand>
</feature>
<reference key="1">
    <citation type="journal article" date="2006" name="Proc. Natl. Acad. Sci. U.S.A.">
        <title>The partitioned Rhizobium etli genome: genetic and metabolic redundancy in seven interacting replicons.</title>
        <authorList>
            <person name="Gonzalez V."/>
            <person name="Santamaria R.I."/>
            <person name="Bustos P."/>
            <person name="Hernandez-Gonzalez I."/>
            <person name="Medrano-Soto A."/>
            <person name="Moreno-Hagelsieb G."/>
            <person name="Janga S.C."/>
            <person name="Ramirez M.A."/>
            <person name="Jimenez-Jacinto V."/>
            <person name="Collado-Vides J."/>
            <person name="Davila G."/>
        </authorList>
    </citation>
    <scope>NUCLEOTIDE SEQUENCE [LARGE SCALE GENOMIC DNA]</scope>
    <source>
        <strain>ATCC 51251 / DSM 11541 / JCM 21823 / NBRC 15573 / CFN 42</strain>
    </source>
</reference>
<keyword id="KW-0012">Acyltransferase</keyword>
<keyword id="KW-0133">Cell shape</keyword>
<keyword id="KW-0961">Cell wall biogenesis/degradation</keyword>
<keyword id="KW-0963">Cytoplasm</keyword>
<keyword id="KW-0460">Magnesium</keyword>
<keyword id="KW-0479">Metal-binding</keyword>
<keyword id="KW-0511">Multifunctional enzyme</keyword>
<keyword id="KW-0548">Nucleotidyltransferase</keyword>
<keyword id="KW-0573">Peptidoglycan synthesis</keyword>
<keyword id="KW-1185">Reference proteome</keyword>
<keyword id="KW-0677">Repeat</keyword>
<keyword id="KW-0808">Transferase</keyword>